<accession>O32622</accession>
<protein>
    <recommendedName>
        <fullName>Uncharacterized protein HI_0292</fullName>
    </recommendedName>
</protein>
<name>Y292_HAEIN</name>
<sequence length="68" mass="7351">MKTITLNIKGIHCGCCVKSLTQVLTELDGVQSADVQLEGKANITFDENRVNVAQLIEVIEDAGFDATE</sequence>
<keyword id="KW-0479">Metal-binding</keyword>
<keyword id="KW-1185">Reference proteome</keyword>
<organism>
    <name type="scientific">Haemophilus influenzae (strain ATCC 51907 / DSM 11121 / KW20 / Rd)</name>
    <dbReference type="NCBI Taxonomy" id="71421"/>
    <lineage>
        <taxon>Bacteria</taxon>
        <taxon>Pseudomonadati</taxon>
        <taxon>Pseudomonadota</taxon>
        <taxon>Gammaproteobacteria</taxon>
        <taxon>Pasteurellales</taxon>
        <taxon>Pasteurellaceae</taxon>
        <taxon>Haemophilus</taxon>
    </lineage>
</organism>
<reference key="1">
    <citation type="journal article" date="1995" name="Science">
        <title>Whole-genome random sequencing and assembly of Haemophilus influenzae Rd.</title>
        <authorList>
            <person name="Fleischmann R.D."/>
            <person name="Adams M.D."/>
            <person name="White O."/>
            <person name="Clayton R.A."/>
            <person name="Kirkness E.F."/>
            <person name="Kerlavage A.R."/>
            <person name="Bult C.J."/>
            <person name="Tomb J.-F."/>
            <person name="Dougherty B.A."/>
            <person name="Merrick J.M."/>
            <person name="McKenney K."/>
            <person name="Sutton G.G."/>
            <person name="FitzHugh W."/>
            <person name="Fields C.A."/>
            <person name="Gocayne J.D."/>
            <person name="Scott J.D."/>
            <person name="Shirley R."/>
            <person name="Liu L.-I."/>
            <person name="Glodek A."/>
            <person name="Kelley J.M."/>
            <person name="Weidman J.F."/>
            <person name="Phillips C.A."/>
            <person name="Spriggs T."/>
            <person name="Hedblom E."/>
            <person name="Cotton M.D."/>
            <person name="Utterback T.R."/>
            <person name="Hanna M.C."/>
            <person name="Nguyen D.T."/>
            <person name="Saudek D.M."/>
            <person name="Brandon R.C."/>
            <person name="Fine L.D."/>
            <person name="Fritchman J.L."/>
            <person name="Fuhrmann J.L."/>
            <person name="Geoghagen N.S.M."/>
            <person name="Gnehm C.L."/>
            <person name="McDonald L.A."/>
            <person name="Small K.V."/>
            <person name="Fraser C.M."/>
            <person name="Smith H.O."/>
            <person name="Venter J.C."/>
        </authorList>
    </citation>
    <scope>NUCLEOTIDE SEQUENCE [LARGE SCALE GENOMIC DNA]</scope>
    <source>
        <strain>ATCC 51907 / DSM 11121 / KW20 / Rd</strain>
    </source>
</reference>
<dbReference type="EMBL" id="L42023">
    <property type="protein sequence ID" value="AAC21956.1"/>
    <property type="molecule type" value="Genomic_DNA"/>
</dbReference>
<dbReference type="PIR" id="H64059">
    <property type="entry name" value="H64059"/>
</dbReference>
<dbReference type="RefSeq" id="NP_438459.1">
    <property type="nucleotide sequence ID" value="NC_000907.1"/>
</dbReference>
<dbReference type="SMR" id="O32622"/>
<dbReference type="STRING" id="71421.HI_0292"/>
<dbReference type="EnsemblBacteria" id="AAC21956">
    <property type="protein sequence ID" value="AAC21956"/>
    <property type="gene ID" value="HI_0292"/>
</dbReference>
<dbReference type="KEGG" id="hin:HI_0292"/>
<dbReference type="PATRIC" id="fig|71421.8.peg.308"/>
<dbReference type="eggNOG" id="COG2608">
    <property type="taxonomic scope" value="Bacteria"/>
</dbReference>
<dbReference type="HOGENOM" id="CLU_134973_10_3_6"/>
<dbReference type="OrthoDB" id="9814359at2"/>
<dbReference type="PhylomeDB" id="O32622"/>
<dbReference type="BioCyc" id="HINF71421:G1GJ1-310-MONOMER"/>
<dbReference type="Proteomes" id="UP000000579">
    <property type="component" value="Chromosome"/>
</dbReference>
<dbReference type="GO" id="GO:0046872">
    <property type="term" value="F:metal ion binding"/>
    <property type="evidence" value="ECO:0007669"/>
    <property type="project" value="UniProtKB-KW"/>
</dbReference>
<dbReference type="CDD" id="cd00371">
    <property type="entry name" value="HMA"/>
    <property type="match status" value="1"/>
</dbReference>
<dbReference type="FunFam" id="3.30.70.100:FF:000001">
    <property type="entry name" value="ATPase copper transporting beta"/>
    <property type="match status" value="1"/>
</dbReference>
<dbReference type="Gene3D" id="3.30.70.100">
    <property type="match status" value="1"/>
</dbReference>
<dbReference type="InterPro" id="IPR017969">
    <property type="entry name" value="Heavy-metal-associated_CS"/>
</dbReference>
<dbReference type="InterPro" id="IPR006121">
    <property type="entry name" value="HMA_dom"/>
</dbReference>
<dbReference type="InterPro" id="IPR036163">
    <property type="entry name" value="HMA_dom_sf"/>
</dbReference>
<dbReference type="PANTHER" id="PTHR46594">
    <property type="entry name" value="P-TYPE CATION-TRANSPORTING ATPASE"/>
    <property type="match status" value="1"/>
</dbReference>
<dbReference type="PANTHER" id="PTHR46594:SF4">
    <property type="entry name" value="P-TYPE CATION-TRANSPORTING ATPASE"/>
    <property type="match status" value="1"/>
</dbReference>
<dbReference type="Pfam" id="PF00403">
    <property type="entry name" value="HMA"/>
    <property type="match status" value="1"/>
</dbReference>
<dbReference type="SUPFAM" id="SSF55008">
    <property type="entry name" value="HMA, heavy metal-associated domain"/>
    <property type="match status" value="1"/>
</dbReference>
<dbReference type="PROSITE" id="PS01047">
    <property type="entry name" value="HMA_1"/>
    <property type="match status" value="1"/>
</dbReference>
<dbReference type="PROSITE" id="PS50846">
    <property type="entry name" value="HMA_2"/>
    <property type="match status" value="1"/>
</dbReference>
<evidence type="ECO:0000255" key="1">
    <source>
        <dbReference type="PROSITE-ProRule" id="PRU00280"/>
    </source>
</evidence>
<feature type="chain" id="PRO_0000077907" description="Uncharacterized protein HI_0292">
    <location>
        <begin position="1"/>
        <end position="68"/>
    </location>
</feature>
<feature type="domain" description="HMA" evidence="1">
    <location>
        <begin position="2"/>
        <end position="67"/>
    </location>
</feature>
<feature type="binding site" evidence="1">
    <location>
        <position position="13"/>
    </location>
    <ligand>
        <name>a metal cation</name>
        <dbReference type="ChEBI" id="CHEBI:25213"/>
    </ligand>
</feature>
<feature type="binding site" evidence="1">
    <location>
        <position position="16"/>
    </location>
    <ligand>
        <name>a metal cation</name>
        <dbReference type="ChEBI" id="CHEBI:25213"/>
    </ligand>
</feature>
<proteinExistence type="predicted"/>
<gene>
    <name type="ordered locus">HI_0292</name>
</gene>